<reference key="1">
    <citation type="journal article" date="1988" name="Gene">
        <title>Molecular cloning and characterization of the met2 gene from Ascobolus immersus.</title>
        <authorList>
            <person name="Goyon C."/>
            <person name="Faugeron G."/>
            <person name="Rossignol J.-L."/>
        </authorList>
    </citation>
    <scope>NUCLEOTIDE SEQUENCE [GENOMIC DNA]</scope>
</reference>
<comment type="function">
    <text evidence="1">Commits homoserine to the methionine biosynthesis pathway by catalyzing its O-acetylation.</text>
</comment>
<comment type="catalytic activity">
    <reaction evidence="1">
        <text>L-homoserine + acetyl-CoA = O-acetyl-L-homoserine + CoA</text>
        <dbReference type="Rhea" id="RHEA:13701"/>
        <dbReference type="ChEBI" id="CHEBI:57287"/>
        <dbReference type="ChEBI" id="CHEBI:57288"/>
        <dbReference type="ChEBI" id="CHEBI:57476"/>
        <dbReference type="ChEBI" id="CHEBI:57716"/>
        <dbReference type="EC" id="2.3.1.31"/>
    </reaction>
    <physiologicalReaction direction="left-to-right" evidence="1">
        <dbReference type="Rhea" id="RHEA:13702"/>
    </physiologicalReaction>
</comment>
<comment type="pathway">
    <text evidence="1">Amino-acid biosynthesis; L-methionine biosynthesis via de novo pathway; O-acetyl-L-homoserine from L-homoserine: step 1/1.</text>
</comment>
<comment type="similarity">
    <text evidence="4">Belongs to the AB hydrolase superfamily. MetX family.</text>
</comment>
<organism>
    <name type="scientific">Ascobolus immersus</name>
    <dbReference type="NCBI Taxonomy" id="5191"/>
    <lineage>
        <taxon>Eukaryota</taxon>
        <taxon>Fungi</taxon>
        <taxon>Dikarya</taxon>
        <taxon>Ascomycota</taxon>
        <taxon>Pezizomycotina</taxon>
        <taxon>Pezizomycetes</taxon>
        <taxon>Pezizales</taxon>
        <taxon>Ascobolaceae</taxon>
        <taxon>Ascobolus</taxon>
    </lineage>
</organism>
<name>MET2_ASCIM</name>
<feature type="chain" id="PRO_0000155754" description="Homoserine O-acetyltransferase">
    <location>
        <begin position="1"/>
        <end position="518"/>
    </location>
</feature>
<feature type="domain" description="AB hydrolase-1" evidence="2">
    <location>
        <begin position="69"/>
        <end position="468"/>
    </location>
</feature>
<feature type="region of interest" description="Disordered" evidence="3">
    <location>
        <begin position="267"/>
        <end position="365"/>
    </location>
</feature>
<feature type="compositionally biased region" description="Basic and acidic residues" evidence="3">
    <location>
        <begin position="290"/>
        <end position="303"/>
    </location>
</feature>
<feature type="compositionally biased region" description="Low complexity" evidence="3">
    <location>
        <begin position="310"/>
        <end position="341"/>
    </location>
</feature>
<feature type="active site" evidence="2">
    <location>
        <position position="182"/>
    </location>
</feature>
<feature type="active site" description="Nucleophile" evidence="1">
    <location>
        <position position="182"/>
    </location>
</feature>
<feature type="active site" evidence="1">
    <location>
        <position position="435"/>
    </location>
</feature>
<feature type="active site" evidence="1">
    <location>
        <position position="464"/>
    </location>
</feature>
<evidence type="ECO:0000250" key="1">
    <source>
        <dbReference type="UniProtKB" id="O60062"/>
    </source>
</evidence>
<evidence type="ECO:0000255" key="2"/>
<evidence type="ECO:0000256" key="3">
    <source>
        <dbReference type="SAM" id="MobiDB-lite"/>
    </source>
</evidence>
<evidence type="ECO:0000305" key="4"/>
<dbReference type="EC" id="2.3.1.31" evidence="1"/>
<dbReference type="EMBL" id="M26662">
    <property type="protein sequence ID" value="AAA32681.1"/>
    <property type="molecule type" value="Genomic_DNA"/>
</dbReference>
<dbReference type="PIR" id="JT0271">
    <property type="entry name" value="XYIMHA"/>
</dbReference>
<dbReference type="SMR" id="P12917"/>
<dbReference type="ESTHER" id="ascim-met2">
    <property type="family name" value="Homoserine_transacetylase"/>
</dbReference>
<dbReference type="UniPathway" id="UPA00051">
    <property type="reaction ID" value="UER00074"/>
</dbReference>
<dbReference type="GO" id="GO:0004414">
    <property type="term" value="F:homoserine O-acetyltransferase activity"/>
    <property type="evidence" value="ECO:0007669"/>
    <property type="project" value="UniProtKB-EC"/>
</dbReference>
<dbReference type="GO" id="GO:0009092">
    <property type="term" value="P:homoserine metabolic process"/>
    <property type="evidence" value="ECO:0007669"/>
    <property type="project" value="TreeGrafter"/>
</dbReference>
<dbReference type="GO" id="GO:0009086">
    <property type="term" value="P:methionine biosynthetic process"/>
    <property type="evidence" value="ECO:0007669"/>
    <property type="project" value="UniProtKB-KW"/>
</dbReference>
<dbReference type="Gene3D" id="3.40.50.1820">
    <property type="entry name" value="alpha/beta hydrolase"/>
    <property type="match status" value="1"/>
</dbReference>
<dbReference type="HAMAP" id="MF_00296">
    <property type="entry name" value="MetX_acyltransf"/>
    <property type="match status" value="1"/>
</dbReference>
<dbReference type="InterPro" id="IPR000073">
    <property type="entry name" value="AB_hydrolase_1"/>
</dbReference>
<dbReference type="InterPro" id="IPR029058">
    <property type="entry name" value="AB_hydrolase_fold"/>
</dbReference>
<dbReference type="InterPro" id="IPR008220">
    <property type="entry name" value="HAT_MetX-like"/>
</dbReference>
<dbReference type="NCBIfam" id="TIGR01392">
    <property type="entry name" value="homoserO_Ac_trn"/>
    <property type="match status" value="1"/>
</dbReference>
<dbReference type="PANTHER" id="PTHR32268">
    <property type="entry name" value="HOMOSERINE O-ACETYLTRANSFERASE"/>
    <property type="match status" value="1"/>
</dbReference>
<dbReference type="PANTHER" id="PTHR32268:SF11">
    <property type="entry name" value="HOMOSERINE O-ACETYLTRANSFERASE"/>
    <property type="match status" value="1"/>
</dbReference>
<dbReference type="Pfam" id="PF00561">
    <property type="entry name" value="Abhydrolase_1"/>
    <property type="match status" value="1"/>
</dbReference>
<dbReference type="PIRSF" id="PIRSF000443">
    <property type="entry name" value="Homoser_Ac_trans"/>
    <property type="match status" value="1"/>
</dbReference>
<dbReference type="SUPFAM" id="SSF53474">
    <property type="entry name" value="alpha/beta-Hydrolases"/>
    <property type="match status" value="1"/>
</dbReference>
<proteinExistence type="inferred from homology"/>
<accession>P12917</accession>
<keyword id="KW-0012">Acyltransferase</keyword>
<keyword id="KW-0028">Amino-acid biosynthesis</keyword>
<keyword id="KW-0486">Methionine biosynthesis</keyword>
<keyword id="KW-0808">Transferase</keyword>
<protein>
    <recommendedName>
        <fullName>Homoserine O-acetyltransferase</fullName>
        <ecNumber evidence="1">2.3.1.31</ecNumber>
    </recommendedName>
    <alternativeName>
        <fullName>Homoserine O-trans-acetylase</fullName>
    </alternativeName>
</protein>
<sequence length="518" mass="57718">MHLVDRVGANAPHKKYERVTTQPENPFFNIVHNQSVAIIPSFTLESGVILYDCPVAYKTFGVLNESADNVMVICHALTGSADVEDWWGPLIGPGRAFDTSRYFIVCCNSMGSPYGSASPCTLDSTTGRRYGPEFPLTTVRDDVRYGSTITMKLGCLLTYYRIHKLIMDDLGVRQIAVVIGGSMGGMLALEWAYFGKDYVKAVVALATSARHSAWCISWGEAQRQSIYSDPKYDDGYYSFSDPPYTGLGAARMSALLTYRSRNSFESRFGRNIPDPSRHPYINTSQPPSHPAEEHYDIHNEGFRNRKGFRRSSTTTSDAPPSPTRTSSTSSTDAITPASTTPLHPSRAQPSGIATPPNSVSDPFRPVKRPCPTYFSAQSYLRYQADKFVKRFDANCYIAITRKLDTHDVSRGRTSTLHEALAMIEQPTLIIGIESDGLFTFAEQMELAEYIPDARLKRIDSPEGHDAFLIMFAEVNRYICEFLREVQPEIMGKEGVHVESKVGEIRASTTGEVEDITHW</sequence>
<gene>
    <name type="primary">MET2</name>
</gene>